<proteinExistence type="inferred from homology"/>
<organism>
    <name type="scientific">Shigella boydii serotype 4 (strain Sb227)</name>
    <dbReference type="NCBI Taxonomy" id="300268"/>
    <lineage>
        <taxon>Bacteria</taxon>
        <taxon>Pseudomonadati</taxon>
        <taxon>Pseudomonadota</taxon>
        <taxon>Gammaproteobacteria</taxon>
        <taxon>Enterobacterales</taxon>
        <taxon>Enterobacteriaceae</taxon>
        <taxon>Shigella</taxon>
    </lineage>
</organism>
<feature type="chain" id="PRO_0000232023" description="Phenylalanine--tRNA ligase alpha subunit">
    <location>
        <begin position="1"/>
        <end position="327"/>
    </location>
</feature>
<feature type="binding site" evidence="1">
    <location>
        <position position="252"/>
    </location>
    <ligand>
        <name>Mg(2+)</name>
        <dbReference type="ChEBI" id="CHEBI:18420"/>
        <note>shared with beta subunit</note>
    </ligand>
</feature>
<dbReference type="EC" id="6.1.1.20" evidence="1"/>
<dbReference type="EMBL" id="CP000036">
    <property type="protein sequence ID" value="ABB66002.1"/>
    <property type="molecule type" value="Genomic_DNA"/>
</dbReference>
<dbReference type="RefSeq" id="WP_000018596.1">
    <property type="nucleotide sequence ID" value="NC_007613.1"/>
</dbReference>
<dbReference type="SMR" id="Q321K6"/>
<dbReference type="GeneID" id="75205640"/>
<dbReference type="KEGG" id="sbo:SBO_1379"/>
<dbReference type="HOGENOM" id="CLU_025086_0_1_6"/>
<dbReference type="Proteomes" id="UP000007067">
    <property type="component" value="Chromosome"/>
</dbReference>
<dbReference type="GO" id="GO:0005737">
    <property type="term" value="C:cytoplasm"/>
    <property type="evidence" value="ECO:0007669"/>
    <property type="project" value="UniProtKB-SubCell"/>
</dbReference>
<dbReference type="GO" id="GO:0005524">
    <property type="term" value="F:ATP binding"/>
    <property type="evidence" value="ECO:0007669"/>
    <property type="project" value="UniProtKB-UniRule"/>
</dbReference>
<dbReference type="GO" id="GO:0000287">
    <property type="term" value="F:magnesium ion binding"/>
    <property type="evidence" value="ECO:0007669"/>
    <property type="project" value="UniProtKB-UniRule"/>
</dbReference>
<dbReference type="GO" id="GO:0004826">
    <property type="term" value="F:phenylalanine-tRNA ligase activity"/>
    <property type="evidence" value="ECO:0007669"/>
    <property type="project" value="UniProtKB-UniRule"/>
</dbReference>
<dbReference type="GO" id="GO:0000049">
    <property type="term" value="F:tRNA binding"/>
    <property type="evidence" value="ECO:0007669"/>
    <property type="project" value="InterPro"/>
</dbReference>
<dbReference type="GO" id="GO:0006432">
    <property type="term" value="P:phenylalanyl-tRNA aminoacylation"/>
    <property type="evidence" value="ECO:0007669"/>
    <property type="project" value="UniProtKB-UniRule"/>
</dbReference>
<dbReference type="CDD" id="cd00496">
    <property type="entry name" value="PheRS_alpha_core"/>
    <property type="match status" value="1"/>
</dbReference>
<dbReference type="FunFam" id="3.30.930.10:FF:000003">
    <property type="entry name" value="Phenylalanine--tRNA ligase alpha subunit"/>
    <property type="match status" value="1"/>
</dbReference>
<dbReference type="Gene3D" id="3.30.930.10">
    <property type="entry name" value="Bira Bifunctional Protein, Domain 2"/>
    <property type="match status" value="1"/>
</dbReference>
<dbReference type="HAMAP" id="MF_00281">
    <property type="entry name" value="Phe_tRNA_synth_alpha1"/>
    <property type="match status" value="1"/>
</dbReference>
<dbReference type="InterPro" id="IPR006195">
    <property type="entry name" value="aa-tRNA-synth_II"/>
</dbReference>
<dbReference type="InterPro" id="IPR045864">
    <property type="entry name" value="aa-tRNA-synth_II/BPL/LPL"/>
</dbReference>
<dbReference type="InterPro" id="IPR004529">
    <property type="entry name" value="Phe-tRNA-synth_IIc_asu"/>
</dbReference>
<dbReference type="InterPro" id="IPR004188">
    <property type="entry name" value="Phe-tRNA_ligase_II_N"/>
</dbReference>
<dbReference type="InterPro" id="IPR022911">
    <property type="entry name" value="Phe_tRNA_ligase_alpha1_bac"/>
</dbReference>
<dbReference type="InterPro" id="IPR002319">
    <property type="entry name" value="Phenylalanyl-tRNA_Synthase"/>
</dbReference>
<dbReference type="InterPro" id="IPR010978">
    <property type="entry name" value="tRNA-bd_arm"/>
</dbReference>
<dbReference type="NCBIfam" id="TIGR00468">
    <property type="entry name" value="pheS"/>
    <property type="match status" value="1"/>
</dbReference>
<dbReference type="PANTHER" id="PTHR11538:SF41">
    <property type="entry name" value="PHENYLALANINE--TRNA LIGASE, MITOCHONDRIAL"/>
    <property type="match status" value="1"/>
</dbReference>
<dbReference type="PANTHER" id="PTHR11538">
    <property type="entry name" value="PHENYLALANYL-TRNA SYNTHETASE"/>
    <property type="match status" value="1"/>
</dbReference>
<dbReference type="Pfam" id="PF02912">
    <property type="entry name" value="Phe_tRNA-synt_N"/>
    <property type="match status" value="1"/>
</dbReference>
<dbReference type="Pfam" id="PF01409">
    <property type="entry name" value="tRNA-synt_2d"/>
    <property type="match status" value="1"/>
</dbReference>
<dbReference type="SUPFAM" id="SSF55681">
    <property type="entry name" value="Class II aaRS and biotin synthetases"/>
    <property type="match status" value="1"/>
</dbReference>
<dbReference type="SUPFAM" id="SSF46589">
    <property type="entry name" value="tRNA-binding arm"/>
    <property type="match status" value="1"/>
</dbReference>
<dbReference type="PROSITE" id="PS50862">
    <property type="entry name" value="AA_TRNA_LIGASE_II"/>
    <property type="match status" value="1"/>
</dbReference>
<accession>Q321K6</accession>
<sequence length="327" mass="36832">MSHLAELVASAKAAISQASDVAALDNVRVEYLGKKGHLTLQMTTLRELPPEERPAAGAVINEAKEQVQQALNARKAELESAALNARLAAETIDVSLPGRRIENGGLHPVTRTIDRIESFFGELGFTVATGPEIEDDYHNFDALNIPGHHPARADHDTFWFDTTRLLRTQTSGVQIRTMKAQQPPIRIIAPGRVYRNDYDQTHTPMFHQMEGLIVDTNISFTNLKGTLHDFLRNFFEEDLQIRFRPSYFPFTEPSAEVDVMGKNGKWLEVLGCGMVHPNVLRNVGIDPEVYSGFAFGMGMERLTMLRYGVTDLRSFFENDLRFLKQFK</sequence>
<reference key="1">
    <citation type="journal article" date="2005" name="Nucleic Acids Res.">
        <title>Genome dynamics and diversity of Shigella species, the etiologic agents of bacillary dysentery.</title>
        <authorList>
            <person name="Yang F."/>
            <person name="Yang J."/>
            <person name="Zhang X."/>
            <person name="Chen L."/>
            <person name="Jiang Y."/>
            <person name="Yan Y."/>
            <person name="Tang X."/>
            <person name="Wang J."/>
            <person name="Xiong Z."/>
            <person name="Dong J."/>
            <person name="Xue Y."/>
            <person name="Zhu Y."/>
            <person name="Xu X."/>
            <person name="Sun L."/>
            <person name="Chen S."/>
            <person name="Nie H."/>
            <person name="Peng J."/>
            <person name="Xu J."/>
            <person name="Wang Y."/>
            <person name="Yuan Z."/>
            <person name="Wen Y."/>
            <person name="Yao Z."/>
            <person name="Shen Y."/>
            <person name="Qiang B."/>
            <person name="Hou Y."/>
            <person name="Yu J."/>
            <person name="Jin Q."/>
        </authorList>
    </citation>
    <scope>NUCLEOTIDE SEQUENCE [LARGE SCALE GENOMIC DNA]</scope>
    <source>
        <strain>Sb227</strain>
    </source>
</reference>
<name>SYFA_SHIBS</name>
<evidence type="ECO:0000255" key="1">
    <source>
        <dbReference type="HAMAP-Rule" id="MF_00281"/>
    </source>
</evidence>
<comment type="catalytic activity">
    <reaction evidence="1">
        <text>tRNA(Phe) + L-phenylalanine + ATP = L-phenylalanyl-tRNA(Phe) + AMP + diphosphate + H(+)</text>
        <dbReference type="Rhea" id="RHEA:19413"/>
        <dbReference type="Rhea" id="RHEA-COMP:9668"/>
        <dbReference type="Rhea" id="RHEA-COMP:9699"/>
        <dbReference type="ChEBI" id="CHEBI:15378"/>
        <dbReference type="ChEBI" id="CHEBI:30616"/>
        <dbReference type="ChEBI" id="CHEBI:33019"/>
        <dbReference type="ChEBI" id="CHEBI:58095"/>
        <dbReference type="ChEBI" id="CHEBI:78442"/>
        <dbReference type="ChEBI" id="CHEBI:78531"/>
        <dbReference type="ChEBI" id="CHEBI:456215"/>
        <dbReference type="EC" id="6.1.1.20"/>
    </reaction>
</comment>
<comment type="cofactor">
    <cofactor evidence="1">
        <name>Mg(2+)</name>
        <dbReference type="ChEBI" id="CHEBI:18420"/>
    </cofactor>
    <text evidence="1">Binds 2 magnesium ions per tetramer.</text>
</comment>
<comment type="subunit">
    <text evidence="1">Tetramer of two alpha and two beta subunits.</text>
</comment>
<comment type="subcellular location">
    <subcellularLocation>
        <location evidence="1">Cytoplasm</location>
    </subcellularLocation>
</comment>
<comment type="similarity">
    <text evidence="1">Belongs to the class-II aminoacyl-tRNA synthetase family. Phe-tRNA synthetase alpha subunit type 1 subfamily.</text>
</comment>
<protein>
    <recommendedName>
        <fullName evidence="1">Phenylalanine--tRNA ligase alpha subunit</fullName>
        <ecNumber evidence="1">6.1.1.20</ecNumber>
    </recommendedName>
    <alternativeName>
        <fullName evidence="1">Phenylalanyl-tRNA synthetase alpha subunit</fullName>
        <shortName evidence="1">PheRS</shortName>
    </alternativeName>
</protein>
<gene>
    <name evidence="1" type="primary">pheS</name>
    <name type="ordered locus">SBO_1379</name>
</gene>
<keyword id="KW-0030">Aminoacyl-tRNA synthetase</keyword>
<keyword id="KW-0067">ATP-binding</keyword>
<keyword id="KW-0963">Cytoplasm</keyword>
<keyword id="KW-0436">Ligase</keyword>
<keyword id="KW-0460">Magnesium</keyword>
<keyword id="KW-0479">Metal-binding</keyword>
<keyword id="KW-0547">Nucleotide-binding</keyword>
<keyword id="KW-0648">Protein biosynthesis</keyword>